<proteinExistence type="inferred from homology"/>
<dbReference type="EMBL" id="AE005674">
    <property type="protein sequence ID" value="AAN41677.1"/>
    <property type="molecule type" value="Genomic_DNA"/>
</dbReference>
<dbReference type="EMBL" id="AE014073">
    <property type="protein sequence ID" value="AAP15556.1"/>
    <property type="molecule type" value="Genomic_DNA"/>
</dbReference>
<dbReference type="RefSeq" id="NP_705970.1">
    <property type="nucleotide sequence ID" value="NC_004337.2"/>
</dbReference>
<dbReference type="RefSeq" id="WP_000528538.1">
    <property type="nucleotide sequence ID" value="NZ_WPGW01000013.1"/>
</dbReference>
<dbReference type="SMR" id="P0ACA0"/>
<dbReference type="STRING" id="198214.SF0011"/>
<dbReference type="PaxDb" id="198214-SF0011"/>
<dbReference type="GeneID" id="1027481"/>
<dbReference type="GeneID" id="93777432"/>
<dbReference type="KEGG" id="sfl:SF0011"/>
<dbReference type="KEGG" id="sfx:S0010"/>
<dbReference type="PATRIC" id="fig|198214.7.peg.10"/>
<dbReference type="HOGENOM" id="CLU_051062_3_0_6"/>
<dbReference type="Proteomes" id="UP000001006">
    <property type="component" value="Chromosome"/>
</dbReference>
<dbReference type="Proteomes" id="UP000002673">
    <property type="component" value="Chromosome"/>
</dbReference>
<dbReference type="GO" id="GO:0005886">
    <property type="term" value="C:plasma membrane"/>
    <property type="evidence" value="ECO:0007669"/>
    <property type="project" value="UniProtKB-SubCell"/>
</dbReference>
<dbReference type="GO" id="GO:0015360">
    <property type="term" value="F:acetate:proton symporter activity"/>
    <property type="evidence" value="ECO:0007669"/>
    <property type="project" value="TreeGrafter"/>
</dbReference>
<dbReference type="GO" id="GO:0071422">
    <property type="term" value="P:succinate transmembrane transport"/>
    <property type="evidence" value="ECO:0007669"/>
    <property type="project" value="TreeGrafter"/>
</dbReference>
<dbReference type="InterPro" id="IPR000791">
    <property type="entry name" value="Gpr1/Fun34/SatP-like"/>
</dbReference>
<dbReference type="InterPro" id="IPR047622">
    <property type="entry name" value="GPR1_FUN34_YAAH"/>
</dbReference>
<dbReference type="InterPro" id="IPR047623">
    <property type="entry name" value="SatP"/>
</dbReference>
<dbReference type="NCBIfam" id="NF038013">
    <property type="entry name" value="AceTr_1"/>
    <property type="match status" value="1"/>
</dbReference>
<dbReference type="NCBIfam" id="NF007941">
    <property type="entry name" value="PRK10659.1"/>
    <property type="match status" value="1"/>
</dbReference>
<dbReference type="PANTHER" id="PTHR30178">
    <property type="entry name" value="INNER MEMBRANE PROTEIN YAAH"/>
    <property type="match status" value="1"/>
</dbReference>
<dbReference type="PANTHER" id="PTHR30178:SF3">
    <property type="entry name" value="SUCCINATE-ACETATE_PROTON SYMPORTER SATP"/>
    <property type="match status" value="1"/>
</dbReference>
<dbReference type="Pfam" id="PF01184">
    <property type="entry name" value="Gpr1_Fun34_YaaH"/>
    <property type="match status" value="1"/>
</dbReference>
<dbReference type="PROSITE" id="PS01114">
    <property type="entry name" value="GPR1_FUN34_YAAH"/>
    <property type="match status" value="1"/>
</dbReference>
<gene>
    <name type="primary">satP</name>
    <name type="synonym">yaaH</name>
    <name type="ordered locus">SF0011</name>
    <name type="ordered locus">S0010</name>
</gene>
<organism>
    <name type="scientific">Shigella flexneri</name>
    <dbReference type="NCBI Taxonomy" id="623"/>
    <lineage>
        <taxon>Bacteria</taxon>
        <taxon>Pseudomonadati</taxon>
        <taxon>Pseudomonadota</taxon>
        <taxon>Gammaproteobacteria</taxon>
        <taxon>Enterobacterales</taxon>
        <taxon>Enterobacteriaceae</taxon>
        <taxon>Shigella</taxon>
    </lineage>
</organism>
<evidence type="ECO:0000250" key="1"/>
<evidence type="ECO:0000255" key="2"/>
<evidence type="ECO:0000305" key="3"/>
<protein>
    <recommendedName>
        <fullName>Succinate-acetate/proton symporter SatP</fullName>
    </recommendedName>
    <alternativeName>
        <fullName>Succinate-acetate transporter protein</fullName>
    </alternativeName>
</protein>
<comment type="function">
    <text evidence="1">Uptake of acetate and succinate. Transport is energetically dependent on the protonmotive force (By similarity).</text>
</comment>
<comment type="subcellular location">
    <subcellularLocation>
        <location evidence="1">Cell inner membrane</location>
        <topology evidence="1">Multi-pass membrane protein</topology>
    </subcellularLocation>
</comment>
<comment type="similarity">
    <text evidence="3">Belongs to the acetate uptake transporter (AceTr) (TC 2.A.96) family.</text>
</comment>
<sequence>MGNTKLANPAPLGLMGFGMTTILLNLHNVGYFALDGIILAMGIFYGGIAQIFAGLLEYKKGNTFGLTAFTSYGSFWLTLVAILLMPKLGLTDAPNAQFLGVYLGLWGVFTLFMFFGTLKGARVLQFVFFSLTVLFALLAIGNIAGNAAIIHFAGWIGLICGASAIYLAMGEVLNEQFGRTVLPIGESH</sequence>
<name>SATP_SHIFL</name>
<reference key="1">
    <citation type="journal article" date="2002" name="Nucleic Acids Res.">
        <title>Genome sequence of Shigella flexneri 2a: insights into pathogenicity through comparison with genomes of Escherichia coli K12 and O157.</title>
        <authorList>
            <person name="Jin Q."/>
            <person name="Yuan Z."/>
            <person name="Xu J."/>
            <person name="Wang Y."/>
            <person name="Shen Y."/>
            <person name="Lu W."/>
            <person name="Wang J."/>
            <person name="Liu H."/>
            <person name="Yang J."/>
            <person name="Yang F."/>
            <person name="Zhang X."/>
            <person name="Zhang J."/>
            <person name="Yang G."/>
            <person name="Wu H."/>
            <person name="Qu D."/>
            <person name="Dong J."/>
            <person name="Sun L."/>
            <person name="Xue Y."/>
            <person name="Zhao A."/>
            <person name="Gao Y."/>
            <person name="Zhu J."/>
            <person name="Kan B."/>
            <person name="Ding K."/>
            <person name="Chen S."/>
            <person name="Cheng H."/>
            <person name="Yao Z."/>
            <person name="He B."/>
            <person name="Chen R."/>
            <person name="Ma D."/>
            <person name="Qiang B."/>
            <person name="Wen Y."/>
            <person name="Hou Y."/>
            <person name="Yu J."/>
        </authorList>
    </citation>
    <scope>NUCLEOTIDE SEQUENCE [LARGE SCALE GENOMIC DNA]</scope>
    <source>
        <strain>301 / Serotype 2a</strain>
    </source>
</reference>
<reference key="2">
    <citation type="journal article" date="2003" name="Infect. Immun.">
        <title>Complete genome sequence and comparative genomics of Shigella flexneri serotype 2a strain 2457T.</title>
        <authorList>
            <person name="Wei J."/>
            <person name="Goldberg M.B."/>
            <person name="Burland V."/>
            <person name="Venkatesan M.M."/>
            <person name="Deng W."/>
            <person name="Fournier G."/>
            <person name="Mayhew G.F."/>
            <person name="Plunkett G. III"/>
            <person name="Rose D.J."/>
            <person name="Darling A."/>
            <person name="Mau B."/>
            <person name="Perna N.T."/>
            <person name="Payne S.M."/>
            <person name="Runyen-Janecky L.J."/>
            <person name="Zhou S."/>
            <person name="Schwartz D.C."/>
            <person name="Blattner F.R."/>
        </authorList>
    </citation>
    <scope>NUCLEOTIDE SEQUENCE [LARGE SCALE GENOMIC DNA]</scope>
    <source>
        <strain>ATCC 700930 / 2457T / Serotype 2a</strain>
    </source>
</reference>
<keyword id="KW-0997">Cell inner membrane</keyword>
<keyword id="KW-1003">Cell membrane</keyword>
<keyword id="KW-0406">Ion transport</keyword>
<keyword id="KW-0472">Membrane</keyword>
<keyword id="KW-1185">Reference proteome</keyword>
<keyword id="KW-0769">Symport</keyword>
<keyword id="KW-0812">Transmembrane</keyword>
<keyword id="KW-1133">Transmembrane helix</keyword>
<keyword id="KW-0813">Transport</keyword>
<feature type="chain" id="PRO_0000135705" description="Succinate-acetate/proton symporter SatP">
    <location>
        <begin position="1"/>
        <end position="188"/>
    </location>
</feature>
<feature type="topological domain" description="Cytoplasmic" evidence="2">
    <location>
        <begin position="1"/>
        <end position="13"/>
    </location>
</feature>
<feature type="transmembrane region" description="Helical" evidence="2">
    <location>
        <begin position="14"/>
        <end position="34"/>
    </location>
</feature>
<feature type="topological domain" description="Periplasmic" evidence="2">
    <location>
        <position position="35"/>
    </location>
</feature>
<feature type="transmembrane region" description="Helical" evidence="2">
    <location>
        <begin position="36"/>
        <end position="56"/>
    </location>
</feature>
<feature type="topological domain" description="Cytoplasmic" evidence="2">
    <location>
        <begin position="57"/>
        <end position="63"/>
    </location>
</feature>
<feature type="transmembrane region" description="Helical" evidence="2">
    <location>
        <begin position="64"/>
        <end position="84"/>
    </location>
</feature>
<feature type="topological domain" description="Periplasmic" evidence="2">
    <location>
        <begin position="85"/>
        <end position="97"/>
    </location>
</feature>
<feature type="transmembrane region" description="Helical" evidence="2">
    <location>
        <begin position="98"/>
        <end position="118"/>
    </location>
</feature>
<feature type="topological domain" description="Cytoplasmic" evidence="2">
    <location>
        <begin position="119"/>
        <end position="122"/>
    </location>
</feature>
<feature type="transmembrane region" description="Helical" evidence="2">
    <location>
        <begin position="123"/>
        <end position="143"/>
    </location>
</feature>
<feature type="topological domain" description="Periplasmic" evidence="2">
    <location>
        <begin position="144"/>
        <end position="148"/>
    </location>
</feature>
<feature type="transmembrane region" description="Helical" evidence="2">
    <location>
        <begin position="149"/>
        <end position="169"/>
    </location>
</feature>
<feature type="topological domain" description="Cytoplasmic" evidence="2">
    <location>
        <begin position="170"/>
        <end position="188"/>
    </location>
</feature>
<accession>P0ACA0</accession>
<accession>P28695</accession>
<accession>Q8KMY2</accession>